<keyword id="KW-1185">Reference proteome</keyword>
<dbReference type="EMBL" id="AE000782">
    <property type="protein sequence ID" value="AAB90788.1"/>
    <property type="molecule type" value="Genomic_DNA"/>
</dbReference>
<dbReference type="PIR" id="E69306">
    <property type="entry name" value="E69306"/>
</dbReference>
<dbReference type="RefSeq" id="WP_010877960.1">
    <property type="nucleotide sequence ID" value="NC_000917.1"/>
</dbReference>
<dbReference type="SMR" id="O29796"/>
<dbReference type="STRING" id="224325.AF_0453"/>
<dbReference type="PaxDb" id="224325-AF_0453"/>
<dbReference type="EnsemblBacteria" id="AAB90788">
    <property type="protein sequence ID" value="AAB90788"/>
    <property type="gene ID" value="AF_0453"/>
</dbReference>
<dbReference type="KEGG" id="afu:AF_0453"/>
<dbReference type="HOGENOM" id="CLU_1965425_0_0_2"/>
<dbReference type="Proteomes" id="UP000002199">
    <property type="component" value="Chromosome"/>
</dbReference>
<name>Y453_ARCFU</name>
<reference key="1">
    <citation type="journal article" date="1997" name="Nature">
        <title>The complete genome sequence of the hyperthermophilic, sulphate-reducing archaeon Archaeoglobus fulgidus.</title>
        <authorList>
            <person name="Klenk H.-P."/>
            <person name="Clayton R.A."/>
            <person name="Tomb J.-F."/>
            <person name="White O."/>
            <person name="Nelson K.E."/>
            <person name="Ketchum K.A."/>
            <person name="Dodson R.J."/>
            <person name="Gwinn M.L."/>
            <person name="Hickey E.K."/>
            <person name="Peterson J.D."/>
            <person name="Richardson D.L."/>
            <person name="Kerlavage A.R."/>
            <person name="Graham D.E."/>
            <person name="Kyrpides N.C."/>
            <person name="Fleischmann R.D."/>
            <person name="Quackenbush J."/>
            <person name="Lee N.H."/>
            <person name="Sutton G.G."/>
            <person name="Gill S.R."/>
            <person name="Kirkness E.F."/>
            <person name="Dougherty B.A."/>
            <person name="McKenney K."/>
            <person name="Adams M.D."/>
            <person name="Loftus B.J."/>
            <person name="Peterson S.N."/>
            <person name="Reich C.I."/>
            <person name="McNeil L.K."/>
            <person name="Badger J.H."/>
            <person name="Glodek A."/>
            <person name="Zhou L."/>
            <person name="Overbeek R."/>
            <person name="Gocayne J.D."/>
            <person name="Weidman J.F."/>
            <person name="McDonald L.A."/>
            <person name="Utterback T.R."/>
            <person name="Cotton M.D."/>
            <person name="Spriggs T."/>
            <person name="Artiach P."/>
            <person name="Kaine B.P."/>
            <person name="Sykes S.M."/>
            <person name="Sadow P.W."/>
            <person name="D'Andrea K.P."/>
            <person name="Bowman C."/>
            <person name="Fujii C."/>
            <person name="Garland S.A."/>
            <person name="Mason T.M."/>
            <person name="Olsen G.J."/>
            <person name="Fraser C.M."/>
            <person name="Smith H.O."/>
            <person name="Woese C.R."/>
            <person name="Venter J.C."/>
        </authorList>
    </citation>
    <scope>NUCLEOTIDE SEQUENCE [LARGE SCALE GENOMIC DNA]</scope>
    <source>
        <strain>ATCC 49558 / DSM 4304 / JCM 9628 / NBRC 100126 / VC-16</strain>
    </source>
</reference>
<gene>
    <name type="ordered locus">AF_0453</name>
</gene>
<feature type="chain" id="PRO_0000127879" description="Uncharacterized protein AF_0453">
    <location>
        <begin position="1"/>
        <end position="128"/>
    </location>
</feature>
<proteinExistence type="predicted"/>
<accession>O29796</accession>
<organism>
    <name type="scientific">Archaeoglobus fulgidus (strain ATCC 49558 / DSM 4304 / JCM 9628 / NBRC 100126 / VC-16)</name>
    <dbReference type="NCBI Taxonomy" id="224325"/>
    <lineage>
        <taxon>Archaea</taxon>
        <taxon>Methanobacteriati</taxon>
        <taxon>Methanobacteriota</taxon>
        <taxon>Archaeoglobi</taxon>
        <taxon>Archaeoglobales</taxon>
        <taxon>Archaeoglobaceae</taxon>
        <taxon>Archaeoglobus</taxon>
    </lineage>
</organism>
<protein>
    <recommendedName>
        <fullName>Uncharacterized protein AF_0453</fullName>
    </recommendedName>
</protein>
<sequence>MMDAARKILERLEKRGYKIIEREKVRGESGIEHTFDAVILGPQGKRIAVTILERLGFEHVIPLLAFRNDHRMPHIVFAKEIEVGVEKILKNSNIVVIHLKDLSVAYDHPELREEQVLEKVLKLLEDTT</sequence>